<organism>
    <name type="scientific">Shewanella denitrificans (strain OS217 / ATCC BAA-1090 / DSM 15013)</name>
    <dbReference type="NCBI Taxonomy" id="318161"/>
    <lineage>
        <taxon>Bacteria</taxon>
        <taxon>Pseudomonadati</taxon>
        <taxon>Pseudomonadota</taxon>
        <taxon>Gammaproteobacteria</taxon>
        <taxon>Alteromonadales</taxon>
        <taxon>Shewanellaceae</taxon>
        <taxon>Shewanella</taxon>
    </lineage>
</organism>
<name>RL19_SHEDO</name>
<keyword id="KW-1185">Reference proteome</keyword>
<keyword id="KW-0687">Ribonucleoprotein</keyword>
<keyword id="KW-0689">Ribosomal protein</keyword>
<sequence length="117" mass="13337">MNNIIKMLNDEQMKTDVPDFGAGDTVVVQVRVKEGEKERLQAFEGLVIAKRNRGLHSAFTVRKISNGEGVERAFQTHSPLIASIEVKRRGRVRRAKLYYLRERSGKSARIREKLGTK</sequence>
<gene>
    <name evidence="1" type="primary">rplS</name>
    <name type="ordered locus">Sden_2751</name>
</gene>
<accession>Q12KJ6</accession>
<dbReference type="EMBL" id="CP000302">
    <property type="protein sequence ID" value="ABE56030.1"/>
    <property type="molecule type" value="Genomic_DNA"/>
</dbReference>
<dbReference type="RefSeq" id="WP_011497180.1">
    <property type="nucleotide sequence ID" value="NC_007954.1"/>
</dbReference>
<dbReference type="SMR" id="Q12KJ6"/>
<dbReference type="STRING" id="318161.Sden_2751"/>
<dbReference type="KEGG" id="sdn:Sden_2751"/>
<dbReference type="eggNOG" id="COG0335">
    <property type="taxonomic scope" value="Bacteria"/>
</dbReference>
<dbReference type="HOGENOM" id="CLU_103507_2_2_6"/>
<dbReference type="OrthoDB" id="9803541at2"/>
<dbReference type="Proteomes" id="UP000001982">
    <property type="component" value="Chromosome"/>
</dbReference>
<dbReference type="GO" id="GO:0022625">
    <property type="term" value="C:cytosolic large ribosomal subunit"/>
    <property type="evidence" value="ECO:0007669"/>
    <property type="project" value="TreeGrafter"/>
</dbReference>
<dbReference type="GO" id="GO:0003735">
    <property type="term" value="F:structural constituent of ribosome"/>
    <property type="evidence" value="ECO:0007669"/>
    <property type="project" value="InterPro"/>
</dbReference>
<dbReference type="GO" id="GO:0006412">
    <property type="term" value="P:translation"/>
    <property type="evidence" value="ECO:0007669"/>
    <property type="project" value="UniProtKB-UniRule"/>
</dbReference>
<dbReference type="FunFam" id="2.30.30.790:FF:000001">
    <property type="entry name" value="50S ribosomal protein L19"/>
    <property type="match status" value="1"/>
</dbReference>
<dbReference type="Gene3D" id="2.30.30.790">
    <property type="match status" value="1"/>
</dbReference>
<dbReference type="HAMAP" id="MF_00402">
    <property type="entry name" value="Ribosomal_bL19"/>
    <property type="match status" value="1"/>
</dbReference>
<dbReference type="InterPro" id="IPR001857">
    <property type="entry name" value="Ribosomal_bL19"/>
</dbReference>
<dbReference type="InterPro" id="IPR018257">
    <property type="entry name" value="Ribosomal_bL19_CS"/>
</dbReference>
<dbReference type="InterPro" id="IPR038657">
    <property type="entry name" value="Ribosomal_bL19_sf"/>
</dbReference>
<dbReference type="InterPro" id="IPR008991">
    <property type="entry name" value="Translation_prot_SH3-like_sf"/>
</dbReference>
<dbReference type="NCBIfam" id="TIGR01024">
    <property type="entry name" value="rplS_bact"/>
    <property type="match status" value="1"/>
</dbReference>
<dbReference type="PANTHER" id="PTHR15680:SF9">
    <property type="entry name" value="LARGE RIBOSOMAL SUBUNIT PROTEIN BL19M"/>
    <property type="match status" value="1"/>
</dbReference>
<dbReference type="PANTHER" id="PTHR15680">
    <property type="entry name" value="RIBOSOMAL PROTEIN L19"/>
    <property type="match status" value="1"/>
</dbReference>
<dbReference type="Pfam" id="PF01245">
    <property type="entry name" value="Ribosomal_L19"/>
    <property type="match status" value="1"/>
</dbReference>
<dbReference type="PIRSF" id="PIRSF002191">
    <property type="entry name" value="Ribosomal_L19"/>
    <property type="match status" value="1"/>
</dbReference>
<dbReference type="PRINTS" id="PR00061">
    <property type="entry name" value="RIBOSOMALL19"/>
</dbReference>
<dbReference type="SUPFAM" id="SSF50104">
    <property type="entry name" value="Translation proteins SH3-like domain"/>
    <property type="match status" value="1"/>
</dbReference>
<dbReference type="PROSITE" id="PS01015">
    <property type="entry name" value="RIBOSOMAL_L19"/>
    <property type="match status" value="1"/>
</dbReference>
<evidence type="ECO:0000255" key="1">
    <source>
        <dbReference type="HAMAP-Rule" id="MF_00402"/>
    </source>
</evidence>
<evidence type="ECO:0000305" key="2"/>
<proteinExistence type="inferred from homology"/>
<comment type="function">
    <text evidence="1">This protein is located at the 30S-50S ribosomal subunit interface and may play a role in the structure and function of the aminoacyl-tRNA binding site.</text>
</comment>
<comment type="similarity">
    <text evidence="1">Belongs to the bacterial ribosomal protein bL19 family.</text>
</comment>
<feature type="chain" id="PRO_1000049740" description="Large ribosomal subunit protein bL19">
    <location>
        <begin position="1"/>
        <end position="117"/>
    </location>
</feature>
<reference key="1">
    <citation type="submission" date="2006-03" db="EMBL/GenBank/DDBJ databases">
        <title>Complete sequence of Shewanella denitrificans OS217.</title>
        <authorList>
            <consortium name="US DOE Joint Genome Institute"/>
            <person name="Copeland A."/>
            <person name="Lucas S."/>
            <person name="Lapidus A."/>
            <person name="Barry K."/>
            <person name="Detter J.C."/>
            <person name="Glavina del Rio T."/>
            <person name="Hammon N."/>
            <person name="Israni S."/>
            <person name="Dalin E."/>
            <person name="Tice H."/>
            <person name="Pitluck S."/>
            <person name="Brettin T."/>
            <person name="Bruce D."/>
            <person name="Han C."/>
            <person name="Tapia R."/>
            <person name="Gilna P."/>
            <person name="Kiss H."/>
            <person name="Schmutz J."/>
            <person name="Larimer F."/>
            <person name="Land M."/>
            <person name="Hauser L."/>
            <person name="Kyrpides N."/>
            <person name="Lykidis A."/>
            <person name="Richardson P."/>
        </authorList>
    </citation>
    <scope>NUCLEOTIDE SEQUENCE [LARGE SCALE GENOMIC DNA]</scope>
    <source>
        <strain>OS217 / ATCC BAA-1090 / DSM 15013</strain>
    </source>
</reference>
<protein>
    <recommendedName>
        <fullName evidence="1">Large ribosomal subunit protein bL19</fullName>
    </recommendedName>
    <alternativeName>
        <fullName evidence="2">50S ribosomal protein L19</fullName>
    </alternativeName>
</protein>